<protein>
    <recommendedName>
        <fullName evidence="1">Anthranilate phosphoribosyltransferase 1</fullName>
        <ecNumber evidence="1">2.4.2.18</ecNumber>
    </recommendedName>
</protein>
<proteinExistence type="inferred from homology"/>
<keyword id="KW-0028">Amino-acid biosynthesis</keyword>
<keyword id="KW-0057">Aromatic amino acid biosynthesis</keyword>
<keyword id="KW-0328">Glycosyltransferase</keyword>
<keyword id="KW-0460">Magnesium</keyword>
<keyword id="KW-0479">Metal-binding</keyword>
<keyword id="KW-1185">Reference proteome</keyword>
<keyword id="KW-0808">Transferase</keyword>
<keyword id="KW-0822">Tryptophan biosynthesis</keyword>
<feature type="chain" id="PRO_0000154472" description="Anthranilate phosphoribosyltransferase 1">
    <location>
        <begin position="1"/>
        <end position="345"/>
    </location>
</feature>
<feature type="binding site" evidence="1">
    <location>
        <position position="86"/>
    </location>
    <ligand>
        <name>5-phospho-alpha-D-ribose 1-diphosphate</name>
        <dbReference type="ChEBI" id="CHEBI:58017"/>
    </ligand>
</feature>
<feature type="binding site" evidence="1">
    <location>
        <position position="86"/>
    </location>
    <ligand>
        <name>anthranilate</name>
        <dbReference type="ChEBI" id="CHEBI:16567"/>
        <label>1</label>
    </ligand>
</feature>
<feature type="binding site" evidence="1">
    <location>
        <begin position="89"/>
        <end position="90"/>
    </location>
    <ligand>
        <name>5-phospho-alpha-D-ribose 1-diphosphate</name>
        <dbReference type="ChEBI" id="CHEBI:58017"/>
    </ligand>
</feature>
<feature type="binding site" evidence="1">
    <location>
        <position position="94"/>
    </location>
    <ligand>
        <name>5-phospho-alpha-D-ribose 1-diphosphate</name>
        <dbReference type="ChEBI" id="CHEBI:58017"/>
    </ligand>
</feature>
<feature type="binding site" evidence="1">
    <location>
        <begin position="96"/>
        <end position="99"/>
    </location>
    <ligand>
        <name>5-phospho-alpha-D-ribose 1-diphosphate</name>
        <dbReference type="ChEBI" id="CHEBI:58017"/>
    </ligand>
</feature>
<feature type="binding site" evidence="1">
    <location>
        <position position="98"/>
    </location>
    <ligand>
        <name>Mg(2+)</name>
        <dbReference type="ChEBI" id="CHEBI:18420"/>
        <label>1</label>
    </ligand>
</feature>
<feature type="binding site" evidence="1">
    <location>
        <begin position="114"/>
        <end position="122"/>
    </location>
    <ligand>
        <name>5-phospho-alpha-D-ribose 1-diphosphate</name>
        <dbReference type="ChEBI" id="CHEBI:58017"/>
    </ligand>
</feature>
<feature type="binding site" evidence="1">
    <location>
        <position position="126"/>
    </location>
    <ligand>
        <name>5-phospho-alpha-D-ribose 1-diphosphate</name>
        <dbReference type="ChEBI" id="CHEBI:58017"/>
    </ligand>
</feature>
<feature type="binding site" evidence="1">
    <location>
        <position position="172"/>
    </location>
    <ligand>
        <name>anthranilate</name>
        <dbReference type="ChEBI" id="CHEBI:16567"/>
        <label>2</label>
    </ligand>
</feature>
<feature type="binding site" evidence="1">
    <location>
        <position position="231"/>
    </location>
    <ligand>
        <name>Mg(2+)</name>
        <dbReference type="ChEBI" id="CHEBI:18420"/>
        <label>2</label>
    </ligand>
</feature>
<feature type="binding site" evidence="1">
    <location>
        <position position="232"/>
    </location>
    <ligand>
        <name>Mg(2+)</name>
        <dbReference type="ChEBI" id="CHEBI:18420"/>
        <label>1</label>
    </ligand>
</feature>
<feature type="binding site" evidence="1">
    <location>
        <position position="232"/>
    </location>
    <ligand>
        <name>Mg(2+)</name>
        <dbReference type="ChEBI" id="CHEBI:18420"/>
        <label>2</label>
    </ligand>
</feature>
<accession>Q8XVE7</accession>
<gene>
    <name evidence="1" type="primary">trpD1</name>
    <name type="ordered locus">RSc2884</name>
    <name type="ORF">RS00218</name>
</gene>
<name>TRPD1_RALN1</name>
<sequence>MTISPQDALTRCIEHREIFHDEMLHLMRLIMRGEMSPVIASALIMGLRVKKETIGEIAAAATVMREFATTVDVPAAILDHFVDIVGTGGDGANTFNISTASMFVAAAAGARIAKHGGRGVSSKSGSADVLEALGVNIMLTPEQVAQSIEAVGIGFMFAPNHHPAMKNVAPIRKELGVRTLFNILGPLTNPAGAPNILMGVFHPDLVGIQVRVMQRLGARHAVVVYGKDGMDEVSLGAATVVGELKDGEVREYEIHPEDYGLQMVSNRGLKVADAEESKAMLLGALENVPGTPREIVTLNAGAALYAANLAGSIGDGITLAREAIASGAARAKVDELVRVTNQFKK</sequence>
<organism>
    <name type="scientific">Ralstonia nicotianae (strain ATCC BAA-1114 / GMI1000)</name>
    <name type="common">Ralstonia solanacearum</name>
    <dbReference type="NCBI Taxonomy" id="267608"/>
    <lineage>
        <taxon>Bacteria</taxon>
        <taxon>Pseudomonadati</taxon>
        <taxon>Pseudomonadota</taxon>
        <taxon>Betaproteobacteria</taxon>
        <taxon>Burkholderiales</taxon>
        <taxon>Burkholderiaceae</taxon>
        <taxon>Ralstonia</taxon>
        <taxon>Ralstonia solanacearum species complex</taxon>
    </lineage>
</organism>
<reference key="1">
    <citation type="journal article" date="2002" name="Nature">
        <title>Genome sequence of the plant pathogen Ralstonia solanacearum.</title>
        <authorList>
            <person name="Salanoubat M."/>
            <person name="Genin S."/>
            <person name="Artiguenave F."/>
            <person name="Gouzy J."/>
            <person name="Mangenot S."/>
            <person name="Arlat M."/>
            <person name="Billault A."/>
            <person name="Brottier P."/>
            <person name="Camus J.-C."/>
            <person name="Cattolico L."/>
            <person name="Chandler M."/>
            <person name="Choisne N."/>
            <person name="Claudel-Renard C."/>
            <person name="Cunnac S."/>
            <person name="Demange N."/>
            <person name="Gaspin C."/>
            <person name="Lavie M."/>
            <person name="Moisan A."/>
            <person name="Robert C."/>
            <person name="Saurin W."/>
            <person name="Schiex T."/>
            <person name="Siguier P."/>
            <person name="Thebault P."/>
            <person name="Whalen M."/>
            <person name="Wincker P."/>
            <person name="Levy M."/>
            <person name="Weissenbach J."/>
            <person name="Boucher C.A."/>
        </authorList>
    </citation>
    <scope>NUCLEOTIDE SEQUENCE [LARGE SCALE GENOMIC DNA]</scope>
    <source>
        <strain>ATCC BAA-1114 / GMI1000</strain>
    </source>
</reference>
<evidence type="ECO:0000255" key="1">
    <source>
        <dbReference type="HAMAP-Rule" id="MF_00211"/>
    </source>
</evidence>
<comment type="function">
    <text evidence="1">Catalyzes the transfer of the phosphoribosyl group of 5-phosphorylribose-1-pyrophosphate (PRPP) to anthranilate to yield N-(5'-phosphoribosyl)-anthranilate (PRA).</text>
</comment>
<comment type="catalytic activity">
    <reaction evidence="1">
        <text>N-(5-phospho-beta-D-ribosyl)anthranilate + diphosphate = 5-phospho-alpha-D-ribose 1-diphosphate + anthranilate</text>
        <dbReference type="Rhea" id="RHEA:11768"/>
        <dbReference type="ChEBI" id="CHEBI:16567"/>
        <dbReference type="ChEBI" id="CHEBI:18277"/>
        <dbReference type="ChEBI" id="CHEBI:33019"/>
        <dbReference type="ChEBI" id="CHEBI:58017"/>
        <dbReference type="EC" id="2.4.2.18"/>
    </reaction>
</comment>
<comment type="cofactor">
    <cofactor evidence="1">
        <name>Mg(2+)</name>
        <dbReference type="ChEBI" id="CHEBI:18420"/>
    </cofactor>
    <text evidence="1">Binds 2 magnesium ions per monomer.</text>
</comment>
<comment type="pathway">
    <text evidence="1">Amino-acid biosynthesis; L-tryptophan biosynthesis; L-tryptophan from chorismate: step 2/5.</text>
</comment>
<comment type="subunit">
    <text evidence="1">Homodimer.</text>
</comment>
<comment type="similarity">
    <text evidence="1">Belongs to the anthranilate phosphoribosyltransferase family.</text>
</comment>
<dbReference type="EC" id="2.4.2.18" evidence="1"/>
<dbReference type="EMBL" id="AL646052">
    <property type="protein sequence ID" value="CAD16591.1"/>
    <property type="molecule type" value="Genomic_DNA"/>
</dbReference>
<dbReference type="SMR" id="Q8XVE7"/>
<dbReference type="STRING" id="267608.RSc2884"/>
<dbReference type="EnsemblBacteria" id="CAD16591">
    <property type="protein sequence ID" value="CAD16591"/>
    <property type="gene ID" value="RSc2884"/>
</dbReference>
<dbReference type="KEGG" id="rso:RSc2884"/>
<dbReference type="eggNOG" id="COG0547">
    <property type="taxonomic scope" value="Bacteria"/>
</dbReference>
<dbReference type="HOGENOM" id="CLU_034315_2_1_4"/>
<dbReference type="UniPathway" id="UPA00035">
    <property type="reaction ID" value="UER00041"/>
</dbReference>
<dbReference type="Proteomes" id="UP000001436">
    <property type="component" value="Chromosome"/>
</dbReference>
<dbReference type="GO" id="GO:0005829">
    <property type="term" value="C:cytosol"/>
    <property type="evidence" value="ECO:0007669"/>
    <property type="project" value="TreeGrafter"/>
</dbReference>
<dbReference type="GO" id="GO:0004048">
    <property type="term" value="F:anthranilate phosphoribosyltransferase activity"/>
    <property type="evidence" value="ECO:0007669"/>
    <property type="project" value="UniProtKB-UniRule"/>
</dbReference>
<dbReference type="GO" id="GO:0000287">
    <property type="term" value="F:magnesium ion binding"/>
    <property type="evidence" value="ECO:0007669"/>
    <property type="project" value="UniProtKB-UniRule"/>
</dbReference>
<dbReference type="GO" id="GO:0000162">
    <property type="term" value="P:L-tryptophan biosynthetic process"/>
    <property type="evidence" value="ECO:0007669"/>
    <property type="project" value="UniProtKB-UniRule"/>
</dbReference>
<dbReference type="FunFam" id="3.40.1030.10:FF:000002">
    <property type="entry name" value="Anthranilate phosphoribosyltransferase"/>
    <property type="match status" value="1"/>
</dbReference>
<dbReference type="Gene3D" id="3.40.1030.10">
    <property type="entry name" value="Nucleoside phosphorylase/phosphoribosyltransferase catalytic domain"/>
    <property type="match status" value="1"/>
</dbReference>
<dbReference type="Gene3D" id="1.20.970.10">
    <property type="entry name" value="Transferase, Pyrimidine Nucleoside Phosphorylase, Chain C"/>
    <property type="match status" value="1"/>
</dbReference>
<dbReference type="HAMAP" id="MF_00211">
    <property type="entry name" value="TrpD"/>
    <property type="match status" value="1"/>
</dbReference>
<dbReference type="InterPro" id="IPR005940">
    <property type="entry name" value="Anthranilate_Pribosyl_Tfrase"/>
</dbReference>
<dbReference type="InterPro" id="IPR000312">
    <property type="entry name" value="Glycosyl_Trfase_fam3"/>
</dbReference>
<dbReference type="InterPro" id="IPR017459">
    <property type="entry name" value="Glycosyl_Trfase_fam3_N_dom"/>
</dbReference>
<dbReference type="InterPro" id="IPR036320">
    <property type="entry name" value="Glycosyl_Trfase_fam3_N_dom_sf"/>
</dbReference>
<dbReference type="InterPro" id="IPR035902">
    <property type="entry name" value="Nuc_phospho_transferase"/>
</dbReference>
<dbReference type="NCBIfam" id="TIGR01245">
    <property type="entry name" value="trpD"/>
    <property type="match status" value="1"/>
</dbReference>
<dbReference type="PANTHER" id="PTHR43285">
    <property type="entry name" value="ANTHRANILATE PHOSPHORIBOSYLTRANSFERASE"/>
    <property type="match status" value="1"/>
</dbReference>
<dbReference type="PANTHER" id="PTHR43285:SF2">
    <property type="entry name" value="ANTHRANILATE PHOSPHORIBOSYLTRANSFERASE"/>
    <property type="match status" value="1"/>
</dbReference>
<dbReference type="Pfam" id="PF02885">
    <property type="entry name" value="Glycos_trans_3N"/>
    <property type="match status" value="1"/>
</dbReference>
<dbReference type="Pfam" id="PF00591">
    <property type="entry name" value="Glycos_transf_3"/>
    <property type="match status" value="1"/>
</dbReference>
<dbReference type="SUPFAM" id="SSF52418">
    <property type="entry name" value="Nucleoside phosphorylase/phosphoribosyltransferase catalytic domain"/>
    <property type="match status" value="1"/>
</dbReference>
<dbReference type="SUPFAM" id="SSF47648">
    <property type="entry name" value="Nucleoside phosphorylase/phosphoribosyltransferase N-terminal domain"/>
    <property type="match status" value="1"/>
</dbReference>